<keyword id="KW-0067">ATP-binding</keyword>
<keyword id="KW-0963">Cytoplasm</keyword>
<keyword id="KW-0206">Cytoskeleton</keyword>
<keyword id="KW-0378">Hydrolase</keyword>
<keyword id="KW-0547">Nucleotide-binding</keyword>
<proteinExistence type="inferred from homology"/>
<feature type="chain" id="PRO_0000088904" description="Actin">
    <location>
        <begin position="1"/>
        <end position="376"/>
    </location>
</feature>
<protein>
    <recommendedName>
        <fullName>Actin</fullName>
        <ecNumber evidence="1">3.6.4.-</ecNumber>
    </recommendedName>
</protein>
<name>ACT_CANDC</name>
<evidence type="ECO:0000250" key="1">
    <source>
        <dbReference type="UniProtKB" id="P60010"/>
    </source>
</evidence>
<evidence type="ECO:0000305" key="2"/>
<reference key="1">
    <citation type="journal article" date="1999" name="Microbiology">
        <title>Phylogenetic analysis and rapid identification of Candida dubliniensis based on analysis of ACT1 intron and exon sequences.</title>
        <authorList>
            <person name="Donnelly S.M."/>
            <person name="Sullivan D.J."/>
            <person name="Shanley D.B."/>
            <person name="Coleman D.C."/>
        </authorList>
    </citation>
    <scope>NUCLEOTIDE SEQUENCE [GENOMIC DNA]</scope>
</reference>
<reference key="2">
    <citation type="journal article" date="2009" name="Genome Res.">
        <title>Comparative genomics of the fungal pathogens Candida dubliniensis and Candida albicans.</title>
        <authorList>
            <person name="Jackson A.P."/>
            <person name="Gamble J.A."/>
            <person name="Yeomans T."/>
            <person name="Moran G.P."/>
            <person name="Saunders D."/>
            <person name="Harris D."/>
            <person name="Aslett M."/>
            <person name="Barrell J.F."/>
            <person name="Butler G."/>
            <person name="Citiulo F."/>
            <person name="Coleman D.C."/>
            <person name="de Groot P.W.J."/>
            <person name="Goodwin T.J."/>
            <person name="Quail M.A."/>
            <person name="McQuillan J."/>
            <person name="Munro C.A."/>
            <person name="Pain A."/>
            <person name="Poulter R.T."/>
            <person name="Rajandream M.A."/>
            <person name="Renauld H."/>
            <person name="Spiering M.J."/>
            <person name="Tivey A."/>
            <person name="Gow N.A.R."/>
            <person name="Barrell B."/>
            <person name="Sullivan D.J."/>
            <person name="Berriman M."/>
        </authorList>
    </citation>
    <scope>NUCLEOTIDE SEQUENCE [LARGE SCALE GENOMIC DNA]</scope>
    <source>
        <strain>CD36 / ATCC MYA-646 / CBS 7987 / NCPF 3949 / NRRL Y-17841</strain>
    </source>
</reference>
<accession>Q9UVZ8</accession>
<accession>B9W9Y8</accession>
<comment type="function">
    <text>Actins are highly conserved proteins that are involved in various types of cell motility and are ubiquitously expressed in all eukaryotic cells.</text>
</comment>
<comment type="catalytic activity">
    <reaction evidence="1">
        <text>ATP + H2O = ADP + phosphate + H(+)</text>
        <dbReference type="Rhea" id="RHEA:13065"/>
        <dbReference type="ChEBI" id="CHEBI:15377"/>
        <dbReference type="ChEBI" id="CHEBI:15378"/>
        <dbReference type="ChEBI" id="CHEBI:30616"/>
        <dbReference type="ChEBI" id="CHEBI:43474"/>
        <dbReference type="ChEBI" id="CHEBI:456216"/>
    </reaction>
</comment>
<comment type="subcellular location">
    <subcellularLocation>
        <location>Cytoplasm</location>
        <location>Cytoskeleton</location>
    </subcellularLocation>
</comment>
<comment type="similarity">
    <text evidence="2">Belongs to the actin family.</text>
</comment>
<dbReference type="EC" id="3.6.4.-" evidence="1"/>
<dbReference type="EMBL" id="AJ236897">
    <property type="protein sequence ID" value="CAB53863.1"/>
    <property type="molecule type" value="Genomic_DNA"/>
</dbReference>
<dbReference type="EMBL" id="FM992688">
    <property type="protein sequence ID" value="CAX45626.1"/>
    <property type="molecule type" value="Genomic_DNA"/>
</dbReference>
<dbReference type="RefSeq" id="XP_002417908.1">
    <property type="nucleotide sequence ID" value="XM_002417863.1"/>
</dbReference>
<dbReference type="SMR" id="Q9UVZ8"/>
<dbReference type="GeneID" id="8045460"/>
<dbReference type="KEGG" id="cdu:CD36_12690"/>
<dbReference type="CGD" id="CAL0000169507">
    <property type="gene designation" value="ACT1"/>
</dbReference>
<dbReference type="VEuPathDB" id="FungiDB:CD36_12690"/>
<dbReference type="eggNOG" id="KOG0676">
    <property type="taxonomic scope" value="Eukaryota"/>
</dbReference>
<dbReference type="HOGENOM" id="CLU_027965_0_2_1"/>
<dbReference type="OrthoDB" id="5132116at2759"/>
<dbReference type="Proteomes" id="UP000002605">
    <property type="component" value="Chromosome 1"/>
</dbReference>
<dbReference type="GO" id="GO:0005737">
    <property type="term" value="C:cytoplasm"/>
    <property type="evidence" value="ECO:0007669"/>
    <property type="project" value="UniProtKB-KW"/>
</dbReference>
<dbReference type="GO" id="GO:0005856">
    <property type="term" value="C:cytoskeleton"/>
    <property type="evidence" value="ECO:0007669"/>
    <property type="project" value="UniProtKB-SubCell"/>
</dbReference>
<dbReference type="GO" id="GO:0005524">
    <property type="term" value="F:ATP binding"/>
    <property type="evidence" value="ECO:0007669"/>
    <property type="project" value="UniProtKB-KW"/>
</dbReference>
<dbReference type="GO" id="GO:0016787">
    <property type="term" value="F:hydrolase activity"/>
    <property type="evidence" value="ECO:0007669"/>
    <property type="project" value="UniProtKB-KW"/>
</dbReference>
<dbReference type="CDD" id="cd10224">
    <property type="entry name" value="ASKHA_NBD_actin"/>
    <property type="match status" value="1"/>
</dbReference>
<dbReference type="FunFam" id="3.30.420.40:FF:000148">
    <property type="entry name" value="Actin, alpha skeletal muscle"/>
    <property type="match status" value="1"/>
</dbReference>
<dbReference type="FunFam" id="3.90.640.10:FF:000001">
    <property type="entry name" value="Actin, muscle"/>
    <property type="match status" value="1"/>
</dbReference>
<dbReference type="FunFam" id="3.30.420.40:FF:000404">
    <property type="entry name" value="Major actin"/>
    <property type="match status" value="1"/>
</dbReference>
<dbReference type="FunFam" id="3.30.420.40:FF:000058">
    <property type="entry name" value="Putative actin-related protein 5"/>
    <property type="match status" value="1"/>
</dbReference>
<dbReference type="Gene3D" id="3.30.420.40">
    <property type="match status" value="2"/>
</dbReference>
<dbReference type="Gene3D" id="3.90.640.10">
    <property type="entry name" value="Actin, Chain A, domain 4"/>
    <property type="match status" value="1"/>
</dbReference>
<dbReference type="InterPro" id="IPR004000">
    <property type="entry name" value="Actin"/>
</dbReference>
<dbReference type="InterPro" id="IPR020902">
    <property type="entry name" value="Actin/actin-like_CS"/>
</dbReference>
<dbReference type="InterPro" id="IPR004001">
    <property type="entry name" value="Actin_CS"/>
</dbReference>
<dbReference type="InterPro" id="IPR043129">
    <property type="entry name" value="ATPase_NBD"/>
</dbReference>
<dbReference type="PANTHER" id="PTHR11937">
    <property type="entry name" value="ACTIN"/>
    <property type="match status" value="1"/>
</dbReference>
<dbReference type="Pfam" id="PF00022">
    <property type="entry name" value="Actin"/>
    <property type="match status" value="1"/>
</dbReference>
<dbReference type="PRINTS" id="PR00190">
    <property type="entry name" value="ACTIN"/>
</dbReference>
<dbReference type="SMART" id="SM00268">
    <property type="entry name" value="ACTIN"/>
    <property type="match status" value="1"/>
</dbReference>
<dbReference type="SUPFAM" id="SSF53067">
    <property type="entry name" value="Actin-like ATPase domain"/>
    <property type="match status" value="2"/>
</dbReference>
<dbReference type="PROSITE" id="PS00406">
    <property type="entry name" value="ACTINS_1"/>
    <property type="match status" value="1"/>
</dbReference>
<dbReference type="PROSITE" id="PS00432">
    <property type="entry name" value="ACTINS_2"/>
    <property type="match status" value="1"/>
</dbReference>
<dbReference type="PROSITE" id="PS01132">
    <property type="entry name" value="ACTINS_ACT_LIKE"/>
    <property type="match status" value="1"/>
</dbReference>
<gene>
    <name type="primary">ACT1</name>
    <name type="ORF">CD36_12690</name>
</gene>
<sequence>MDGEEVAALVIDNGSGMCKAGFAGDDAPRAVFPSLVGRPRHQGIMVGMGQKDSYVGDEAQSKRGILTLRYPIEHGIVSNWDDMEKIWHHTFYNELRVAPEEHPVLLTEAPMNPKSNREKMTQIMFETFNVPAFYVSIQAVLSLYSSGRTTGIVLDSGDGVTHVVPIYAGFSLPHGILRIDLAGRDLTNHLSKILSERGYSFTTSAEREIVRDIKERLCYVALDFEQEMQTSSQSSAIEKSYELPDGQVITIGNERFRAPEALFRPADLGLEAAGIDQTTFNSIMKCDMDVRKELYGNIVMSGGTTMFPGIAERMQKEITALAPSSMKVKIIAPPERKYSVWIGGSILASLSTFQQMWISKQEYDESGPSIVHHKCF</sequence>
<organism>
    <name type="scientific">Candida dubliniensis (strain CD36 / ATCC MYA-646 / CBS 7987 / NCPF 3949 / NRRL Y-17841)</name>
    <name type="common">Yeast</name>
    <dbReference type="NCBI Taxonomy" id="573826"/>
    <lineage>
        <taxon>Eukaryota</taxon>
        <taxon>Fungi</taxon>
        <taxon>Dikarya</taxon>
        <taxon>Ascomycota</taxon>
        <taxon>Saccharomycotina</taxon>
        <taxon>Pichiomycetes</taxon>
        <taxon>Debaryomycetaceae</taxon>
        <taxon>Candida/Lodderomyces clade</taxon>
        <taxon>Candida</taxon>
    </lineage>
</organism>